<reference key="1">
    <citation type="journal article" date="2004" name="Nucleic Acids Res.">
        <title>Unique features revealed by the genome sequence of Acinetobacter sp. ADP1, a versatile and naturally transformation competent bacterium.</title>
        <authorList>
            <person name="Barbe V."/>
            <person name="Vallenet D."/>
            <person name="Fonknechten N."/>
            <person name="Kreimeyer A."/>
            <person name="Oztas S."/>
            <person name="Labarre L."/>
            <person name="Cruveiller S."/>
            <person name="Robert C."/>
            <person name="Duprat S."/>
            <person name="Wincker P."/>
            <person name="Ornston L.N."/>
            <person name="Weissenbach J."/>
            <person name="Marliere P."/>
            <person name="Cohen G.N."/>
            <person name="Medigue C."/>
        </authorList>
    </citation>
    <scope>NUCLEOTIDE SEQUENCE [LARGE SCALE GENOMIC DNA]</scope>
    <source>
        <strain>ATCC 33305 / BD413 / ADP1</strain>
    </source>
</reference>
<gene>
    <name evidence="1" type="primary">cca</name>
    <name type="ordered locus">ACIAD2288</name>
</gene>
<evidence type="ECO:0000255" key="1">
    <source>
        <dbReference type="HAMAP-Rule" id="MF_01261"/>
    </source>
</evidence>
<protein>
    <recommendedName>
        <fullName evidence="1">Multifunctional CCA protein</fullName>
    </recommendedName>
    <domain>
        <recommendedName>
            <fullName evidence="1">CCA-adding enzyme</fullName>
            <ecNumber evidence="1">2.7.7.72</ecNumber>
        </recommendedName>
        <alternativeName>
            <fullName evidence="1">CCA tRNA nucleotidyltransferase</fullName>
        </alternativeName>
        <alternativeName>
            <fullName evidence="1">tRNA CCA-pyrophosphorylase</fullName>
        </alternativeName>
        <alternativeName>
            <fullName evidence="1">tRNA adenylyl-/cytidylyl-transferase</fullName>
        </alternativeName>
        <alternativeName>
            <fullName evidence="1">tRNA nucleotidyltransferase</fullName>
        </alternativeName>
        <alternativeName>
            <fullName evidence="1">tRNA-NT</fullName>
        </alternativeName>
    </domain>
    <domain>
        <recommendedName>
            <fullName evidence="1">2'-nucleotidase</fullName>
            <ecNumber evidence="1">3.1.3.-</ecNumber>
        </recommendedName>
    </domain>
    <domain>
        <recommendedName>
            <fullName evidence="1">2',3'-cyclic phosphodiesterase</fullName>
            <ecNumber evidence="1">3.1.4.-</ecNumber>
        </recommendedName>
    </domain>
    <domain>
        <recommendedName>
            <fullName evidence="1">Phosphatase</fullName>
            <ecNumber evidence="1">3.1.3.-</ecNumber>
        </recommendedName>
    </domain>
</protein>
<comment type="function">
    <text evidence="1">Catalyzes the addition and repair of the essential 3'-terminal CCA sequence in tRNAs without using a nucleic acid template. Adds these three nucleotides in the order of C, C, and A to the tRNA nucleotide-73, using CTP and ATP as substrates and producing inorganic pyrophosphate. tRNA 3'-terminal CCA addition is required both for tRNA processing and repair. Also involved in tRNA surveillance by mediating tandem CCA addition to generate a CCACCA at the 3' terminus of unstable tRNAs. While stable tRNAs receive only 3'-terminal CCA, unstable tRNAs are marked with CCACCA and rapidly degraded.</text>
</comment>
<comment type="catalytic activity">
    <reaction evidence="1">
        <text>a tRNA precursor + 2 CTP + ATP = a tRNA with a 3' CCA end + 3 diphosphate</text>
        <dbReference type="Rhea" id="RHEA:14433"/>
        <dbReference type="Rhea" id="RHEA-COMP:10465"/>
        <dbReference type="Rhea" id="RHEA-COMP:10468"/>
        <dbReference type="ChEBI" id="CHEBI:30616"/>
        <dbReference type="ChEBI" id="CHEBI:33019"/>
        <dbReference type="ChEBI" id="CHEBI:37563"/>
        <dbReference type="ChEBI" id="CHEBI:74896"/>
        <dbReference type="ChEBI" id="CHEBI:83071"/>
        <dbReference type="EC" id="2.7.7.72"/>
    </reaction>
</comment>
<comment type="catalytic activity">
    <reaction evidence="1">
        <text>a tRNA with a 3' CCA end + 2 CTP + ATP = a tRNA with a 3' CCACCA end + 3 diphosphate</text>
        <dbReference type="Rhea" id="RHEA:76235"/>
        <dbReference type="Rhea" id="RHEA-COMP:10468"/>
        <dbReference type="Rhea" id="RHEA-COMP:18655"/>
        <dbReference type="ChEBI" id="CHEBI:30616"/>
        <dbReference type="ChEBI" id="CHEBI:33019"/>
        <dbReference type="ChEBI" id="CHEBI:37563"/>
        <dbReference type="ChEBI" id="CHEBI:83071"/>
        <dbReference type="ChEBI" id="CHEBI:195187"/>
    </reaction>
    <physiologicalReaction direction="left-to-right" evidence="1">
        <dbReference type="Rhea" id="RHEA:76236"/>
    </physiologicalReaction>
</comment>
<comment type="cofactor">
    <cofactor evidence="1">
        <name>Mg(2+)</name>
        <dbReference type="ChEBI" id="CHEBI:18420"/>
    </cofactor>
    <text evidence="1">Magnesium is required for nucleotidyltransferase activity.</text>
</comment>
<comment type="cofactor">
    <cofactor evidence="1">
        <name>Ni(2+)</name>
        <dbReference type="ChEBI" id="CHEBI:49786"/>
    </cofactor>
    <text evidence="1">Nickel for phosphatase activity.</text>
</comment>
<comment type="subunit">
    <text evidence="1">Monomer. Can also form homodimers and oligomers.</text>
</comment>
<comment type="domain">
    <text evidence="1">Comprises two domains: an N-terminal domain containing the nucleotidyltransferase activity and a C-terminal HD domain associated with both phosphodiesterase and phosphatase activities.</text>
</comment>
<comment type="miscellaneous">
    <text evidence="1">A single active site specifically recognizes both ATP and CTP and is responsible for their addition.</text>
</comment>
<comment type="similarity">
    <text evidence="1">Belongs to the tRNA nucleotidyltransferase/poly(A) polymerase family. Bacterial CCA-adding enzyme type 1 subfamily.</text>
</comment>
<sequence length="413" mass="47268">MQVYLVGGAVRDHLLGHPYHEKDYVVVGASPQQLLDQGFSPVGKDFPVFLHPKTKEEYALARTERKSGIGYHGFNFFTDPDVSLEDDLIRRDLTINAMAMDQDGNVYDPYGGQKDLEQRILRHVSDAFIEDPLRVLRVARFAARYARYGFKIADETLLLMQSITQTGELESLTAERVWKETSRALMEDQADIYFDVLRQCHALKVLFPEIDALFGVPQRPEYHPEIDCGIHTLMSLRQACKSNYSLDVRYAVLVHDLGKALTPKDILPRHIMHEERGLIPVEELSNRLKIPTQMKQLALAVCKEHLKCHQAMSLKPGTLWRLLQRLDVLRRPERVEAFINACECDARGRLGLENRDYPQAAFMFKAMQVVRSIKAQDLPAYIQGSEIGEKLIQYRIDALAELKKQYDDSLATE</sequence>
<keyword id="KW-0067">ATP-binding</keyword>
<keyword id="KW-0378">Hydrolase</keyword>
<keyword id="KW-0460">Magnesium</keyword>
<keyword id="KW-0479">Metal-binding</keyword>
<keyword id="KW-0511">Multifunctional enzyme</keyword>
<keyword id="KW-0533">Nickel</keyword>
<keyword id="KW-0547">Nucleotide-binding</keyword>
<keyword id="KW-0548">Nucleotidyltransferase</keyword>
<keyword id="KW-0692">RNA repair</keyword>
<keyword id="KW-0694">RNA-binding</keyword>
<keyword id="KW-0808">Transferase</keyword>
<keyword id="KW-0819">tRNA processing</keyword>
<accession>Q6FA38</accession>
<proteinExistence type="inferred from homology"/>
<name>CCA_ACIAD</name>
<organism>
    <name type="scientific">Acinetobacter baylyi (strain ATCC 33305 / BD413 / ADP1)</name>
    <dbReference type="NCBI Taxonomy" id="62977"/>
    <lineage>
        <taxon>Bacteria</taxon>
        <taxon>Pseudomonadati</taxon>
        <taxon>Pseudomonadota</taxon>
        <taxon>Gammaproteobacteria</taxon>
        <taxon>Moraxellales</taxon>
        <taxon>Moraxellaceae</taxon>
        <taxon>Acinetobacter</taxon>
    </lineage>
</organism>
<feature type="chain" id="PRO_0000138970" description="Multifunctional CCA protein">
    <location>
        <begin position="1"/>
        <end position="413"/>
    </location>
</feature>
<feature type="domain" description="HD" evidence="1">
    <location>
        <begin position="228"/>
        <end position="329"/>
    </location>
</feature>
<feature type="binding site" evidence="1">
    <location>
        <position position="8"/>
    </location>
    <ligand>
        <name>ATP</name>
        <dbReference type="ChEBI" id="CHEBI:30616"/>
    </ligand>
</feature>
<feature type="binding site" evidence="1">
    <location>
        <position position="8"/>
    </location>
    <ligand>
        <name>CTP</name>
        <dbReference type="ChEBI" id="CHEBI:37563"/>
    </ligand>
</feature>
<feature type="binding site" evidence="1">
    <location>
        <position position="11"/>
    </location>
    <ligand>
        <name>ATP</name>
        <dbReference type="ChEBI" id="CHEBI:30616"/>
    </ligand>
</feature>
<feature type="binding site" evidence="1">
    <location>
        <position position="11"/>
    </location>
    <ligand>
        <name>CTP</name>
        <dbReference type="ChEBI" id="CHEBI:37563"/>
    </ligand>
</feature>
<feature type="binding site" evidence="1">
    <location>
        <position position="21"/>
    </location>
    <ligand>
        <name>Mg(2+)</name>
        <dbReference type="ChEBI" id="CHEBI:18420"/>
    </ligand>
</feature>
<feature type="binding site" evidence="1">
    <location>
        <position position="23"/>
    </location>
    <ligand>
        <name>Mg(2+)</name>
        <dbReference type="ChEBI" id="CHEBI:18420"/>
    </ligand>
</feature>
<feature type="binding site" evidence="1">
    <location>
        <position position="91"/>
    </location>
    <ligand>
        <name>ATP</name>
        <dbReference type="ChEBI" id="CHEBI:30616"/>
    </ligand>
</feature>
<feature type="binding site" evidence="1">
    <location>
        <position position="91"/>
    </location>
    <ligand>
        <name>CTP</name>
        <dbReference type="ChEBI" id="CHEBI:37563"/>
    </ligand>
</feature>
<feature type="binding site" evidence="1">
    <location>
        <position position="137"/>
    </location>
    <ligand>
        <name>ATP</name>
        <dbReference type="ChEBI" id="CHEBI:30616"/>
    </ligand>
</feature>
<feature type="binding site" evidence="1">
    <location>
        <position position="137"/>
    </location>
    <ligand>
        <name>CTP</name>
        <dbReference type="ChEBI" id="CHEBI:37563"/>
    </ligand>
</feature>
<feature type="binding site" evidence="1">
    <location>
        <position position="140"/>
    </location>
    <ligand>
        <name>ATP</name>
        <dbReference type="ChEBI" id="CHEBI:30616"/>
    </ligand>
</feature>
<feature type="binding site" evidence="1">
    <location>
        <position position="140"/>
    </location>
    <ligand>
        <name>CTP</name>
        <dbReference type="ChEBI" id="CHEBI:37563"/>
    </ligand>
</feature>
<dbReference type="EC" id="2.7.7.72" evidence="1"/>
<dbReference type="EC" id="3.1.3.-" evidence="1"/>
<dbReference type="EC" id="3.1.4.-" evidence="1"/>
<dbReference type="EMBL" id="CR543861">
    <property type="protein sequence ID" value="CAG69075.1"/>
    <property type="molecule type" value="Genomic_DNA"/>
</dbReference>
<dbReference type="RefSeq" id="WP_004927974.1">
    <property type="nucleotide sequence ID" value="NC_005966.1"/>
</dbReference>
<dbReference type="SMR" id="Q6FA38"/>
<dbReference type="STRING" id="202950.GCA_001485005_00113"/>
<dbReference type="GeneID" id="45234611"/>
<dbReference type="KEGG" id="aci:ACIAD2288"/>
<dbReference type="eggNOG" id="COG0617">
    <property type="taxonomic scope" value="Bacteria"/>
</dbReference>
<dbReference type="HOGENOM" id="CLU_015961_1_1_6"/>
<dbReference type="OrthoDB" id="9805698at2"/>
<dbReference type="BioCyc" id="ASP62977:ACIAD_RS10465-MONOMER"/>
<dbReference type="Proteomes" id="UP000000430">
    <property type="component" value="Chromosome"/>
</dbReference>
<dbReference type="GO" id="GO:0005524">
    <property type="term" value="F:ATP binding"/>
    <property type="evidence" value="ECO:0007669"/>
    <property type="project" value="UniProtKB-UniRule"/>
</dbReference>
<dbReference type="GO" id="GO:0004810">
    <property type="term" value="F:CCA tRNA nucleotidyltransferase activity"/>
    <property type="evidence" value="ECO:0007669"/>
    <property type="project" value="UniProtKB-UniRule"/>
</dbReference>
<dbReference type="GO" id="GO:0004112">
    <property type="term" value="F:cyclic-nucleotide phosphodiesterase activity"/>
    <property type="evidence" value="ECO:0007669"/>
    <property type="project" value="UniProtKB-UniRule"/>
</dbReference>
<dbReference type="GO" id="GO:0000287">
    <property type="term" value="F:magnesium ion binding"/>
    <property type="evidence" value="ECO:0007669"/>
    <property type="project" value="UniProtKB-UniRule"/>
</dbReference>
<dbReference type="GO" id="GO:0016791">
    <property type="term" value="F:phosphatase activity"/>
    <property type="evidence" value="ECO:0007669"/>
    <property type="project" value="UniProtKB-UniRule"/>
</dbReference>
<dbReference type="GO" id="GO:0000049">
    <property type="term" value="F:tRNA binding"/>
    <property type="evidence" value="ECO:0007669"/>
    <property type="project" value="UniProtKB-UniRule"/>
</dbReference>
<dbReference type="GO" id="GO:0042245">
    <property type="term" value="P:RNA repair"/>
    <property type="evidence" value="ECO:0007669"/>
    <property type="project" value="UniProtKB-KW"/>
</dbReference>
<dbReference type="GO" id="GO:0001680">
    <property type="term" value="P:tRNA 3'-terminal CCA addition"/>
    <property type="evidence" value="ECO:0007669"/>
    <property type="project" value="UniProtKB-UniRule"/>
</dbReference>
<dbReference type="CDD" id="cd05398">
    <property type="entry name" value="NT_ClassII-CCAase"/>
    <property type="match status" value="1"/>
</dbReference>
<dbReference type="Gene3D" id="3.30.460.10">
    <property type="entry name" value="Beta Polymerase, domain 2"/>
    <property type="match status" value="1"/>
</dbReference>
<dbReference type="Gene3D" id="1.10.3090.10">
    <property type="entry name" value="cca-adding enzyme, domain 2"/>
    <property type="match status" value="1"/>
</dbReference>
<dbReference type="HAMAP" id="MF_01261">
    <property type="entry name" value="CCA_bact_type1"/>
    <property type="match status" value="1"/>
</dbReference>
<dbReference type="HAMAP" id="MF_01262">
    <property type="entry name" value="CCA_bact_type2"/>
    <property type="match status" value="1"/>
</dbReference>
<dbReference type="InterPro" id="IPR012006">
    <property type="entry name" value="CCA_bact"/>
</dbReference>
<dbReference type="InterPro" id="IPR006674">
    <property type="entry name" value="HD_domain"/>
</dbReference>
<dbReference type="InterPro" id="IPR043519">
    <property type="entry name" value="NT_sf"/>
</dbReference>
<dbReference type="InterPro" id="IPR002646">
    <property type="entry name" value="PolA_pol_head_dom"/>
</dbReference>
<dbReference type="InterPro" id="IPR032828">
    <property type="entry name" value="PolyA_RNA-bd"/>
</dbReference>
<dbReference type="InterPro" id="IPR050124">
    <property type="entry name" value="tRNA_CCA-adding_enzyme"/>
</dbReference>
<dbReference type="NCBIfam" id="NF008137">
    <property type="entry name" value="PRK10885.1"/>
    <property type="match status" value="1"/>
</dbReference>
<dbReference type="PANTHER" id="PTHR47545">
    <property type="entry name" value="MULTIFUNCTIONAL CCA PROTEIN"/>
    <property type="match status" value="1"/>
</dbReference>
<dbReference type="PANTHER" id="PTHR47545:SF1">
    <property type="entry name" value="MULTIFUNCTIONAL CCA PROTEIN"/>
    <property type="match status" value="1"/>
</dbReference>
<dbReference type="Pfam" id="PF01743">
    <property type="entry name" value="PolyA_pol"/>
    <property type="match status" value="1"/>
</dbReference>
<dbReference type="Pfam" id="PF12627">
    <property type="entry name" value="PolyA_pol_RNAbd"/>
    <property type="match status" value="1"/>
</dbReference>
<dbReference type="PIRSF" id="PIRSF000813">
    <property type="entry name" value="CCA_bact"/>
    <property type="match status" value="1"/>
</dbReference>
<dbReference type="SUPFAM" id="SSF81301">
    <property type="entry name" value="Nucleotidyltransferase"/>
    <property type="match status" value="1"/>
</dbReference>
<dbReference type="SUPFAM" id="SSF81891">
    <property type="entry name" value="Poly A polymerase C-terminal region-like"/>
    <property type="match status" value="1"/>
</dbReference>
<dbReference type="PROSITE" id="PS51831">
    <property type="entry name" value="HD"/>
    <property type="match status" value="1"/>
</dbReference>